<protein>
    <recommendedName>
        <fullName>Tissue alpha-L-fucosidase</fullName>
        <ecNumber>3.2.1.51</ecNumber>
    </recommendedName>
    <alternativeName>
        <fullName>Alpha-L-fucosidase I</fullName>
    </alternativeName>
    <alternativeName>
        <fullName>Alpha-L-fucoside fucohydrolase 1</fullName>
        <shortName>Alpha-L-fucosidase 1</shortName>
    </alternativeName>
</protein>
<proteinExistence type="evidence at transcript level"/>
<organism>
    <name type="scientific">Macaca fascicularis</name>
    <name type="common">Crab-eating macaque</name>
    <name type="synonym">Cynomolgus monkey</name>
    <dbReference type="NCBI Taxonomy" id="9541"/>
    <lineage>
        <taxon>Eukaryota</taxon>
        <taxon>Metazoa</taxon>
        <taxon>Chordata</taxon>
        <taxon>Craniata</taxon>
        <taxon>Vertebrata</taxon>
        <taxon>Euteleostomi</taxon>
        <taxon>Mammalia</taxon>
        <taxon>Eutheria</taxon>
        <taxon>Euarchontoglires</taxon>
        <taxon>Primates</taxon>
        <taxon>Haplorrhini</taxon>
        <taxon>Catarrhini</taxon>
        <taxon>Cercopithecidae</taxon>
        <taxon>Cercopithecinae</taxon>
        <taxon>Macaca</taxon>
    </lineage>
</organism>
<name>FUCO_MACFA</name>
<keyword id="KW-0325">Glycoprotein</keyword>
<keyword id="KW-0326">Glycosidase</keyword>
<keyword id="KW-0378">Hydrolase</keyword>
<keyword id="KW-0443">Lipid metabolism</keyword>
<keyword id="KW-0458">Lysosome</keyword>
<keyword id="KW-0597">Phosphoprotein</keyword>
<keyword id="KW-1185">Reference proteome</keyword>
<keyword id="KW-0732">Signal</keyword>
<reference key="1">
    <citation type="submission" date="2003-10" db="EMBL/GenBank/DDBJ databases">
        <title>Isolation and characterization of cDNA for macaque neurological disease genes.</title>
        <authorList>
            <person name="Kusuda J."/>
            <person name="Osada N."/>
            <person name="Tanuma R."/>
            <person name="Hirata M."/>
            <person name="Sugano S."/>
            <person name="Hashimoto K."/>
        </authorList>
    </citation>
    <scope>NUCLEOTIDE SEQUENCE [LARGE SCALE MRNA]</scope>
    <source>
        <tissue>Brain cortex</tissue>
    </source>
</reference>
<reference key="2">
    <citation type="submission" date="2005-06" db="EMBL/GenBank/DDBJ databases">
        <title>DNA sequences of macaque genes expressed in brain or testis and its evolutionary implications.</title>
        <authorList>
            <consortium name="International consortium for macaque cDNA sequencing and analysis"/>
        </authorList>
    </citation>
    <scope>NUCLEOTIDE SEQUENCE [LARGE SCALE MRNA]</scope>
    <source>
        <tissue>Brain cortex</tissue>
    </source>
</reference>
<comment type="function">
    <text evidence="1">Alpha-L-fucosidase is responsible for hydrolyzing the alpha-1,6-linked fucose joined to the reducing-end N-acetylglucosamine of the carbohydrate moieties of glycoproteins.</text>
</comment>
<comment type="catalytic activity">
    <reaction evidence="4">
        <text>an alpha-L-fucoside + H2O = L-fucose + an alcohol</text>
        <dbReference type="Rhea" id="RHEA:12288"/>
        <dbReference type="ChEBI" id="CHEBI:2181"/>
        <dbReference type="ChEBI" id="CHEBI:15377"/>
        <dbReference type="ChEBI" id="CHEBI:28349"/>
        <dbReference type="ChEBI" id="CHEBI:30879"/>
        <dbReference type="EC" id="3.2.1.51"/>
    </reaction>
</comment>
<comment type="catalytic activity">
    <reaction evidence="2">
        <text>a neolactoside IV(2)-alpha-Fuc-nLc4Cer(d18:1(4E)) + H2O = a neolactoside nLc4Cer(d18:1(4E)) + L-fucose</text>
        <dbReference type="Rhea" id="RHEA:48224"/>
        <dbReference type="ChEBI" id="CHEBI:2181"/>
        <dbReference type="ChEBI" id="CHEBI:15377"/>
        <dbReference type="ChEBI" id="CHEBI:17006"/>
        <dbReference type="ChEBI" id="CHEBI:28691"/>
    </reaction>
    <physiologicalReaction direction="left-to-right" evidence="2">
        <dbReference type="Rhea" id="RHEA:48225"/>
    </physiologicalReaction>
</comment>
<comment type="catalytic activity">
    <reaction evidence="2">
        <text>a neolactoside IV(2)-alpha-Fuc-nLc4Cer(d18:0) + H2O = a neolactoside nLc4Cer(d18:0) + L-fucose</text>
        <dbReference type="Rhea" id="RHEA:49308"/>
        <dbReference type="ChEBI" id="CHEBI:2181"/>
        <dbReference type="ChEBI" id="CHEBI:15377"/>
        <dbReference type="ChEBI" id="CHEBI:91119"/>
        <dbReference type="ChEBI" id="CHEBI:91121"/>
    </reaction>
    <physiologicalReaction direction="left-to-right" evidence="2">
        <dbReference type="Rhea" id="RHEA:49309"/>
    </physiologicalReaction>
</comment>
<comment type="subunit">
    <text evidence="1">Homotetramer.</text>
</comment>
<comment type="subcellular location">
    <subcellularLocation>
        <location evidence="2">Lysosome</location>
    </subcellularLocation>
</comment>
<comment type="similarity">
    <text evidence="5">Belongs to the glycosyl hydrolase 29 family.</text>
</comment>
<gene>
    <name type="primary">FUCA1</name>
    <name type="ORF">QccE-17330</name>
</gene>
<dbReference type="EC" id="3.2.1.51"/>
<dbReference type="EMBL" id="AB125169">
    <property type="protein sequence ID" value="BAD51957.1"/>
    <property type="molecule type" value="mRNA"/>
</dbReference>
<dbReference type="EMBL" id="AB169681">
    <property type="protein sequence ID" value="BAE01762.1"/>
    <property type="molecule type" value="mRNA"/>
</dbReference>
<dbReference type="SMR" id="Q60HF8"/>
<dbReference type="STRING" id="9541.ENSMFAP00000008915"/>
<dbReference type="CAZy" id="GH29">
    <property type="family name" value="Glycoside Hydrolase Family 29"/>
</dbReference>
<dbReference type="GlyCosmos" id="Q60HF8">
    <property type="glycosylation" value="3 sites, No reported glycans"/>
</dbReference>
<dbReference type="eggNOG" id="KOG3340">
    <property type="taxonomic scope" value="Eukaryota"/>
</dbReference>
<dbReference type="BRENDA" id="3.2.1.51">
    <property type="organism ID" value="1793"/>
</dbReference>
<dbReference type="Proteomes" id="UP000233100">
    <property type="component" value="Unplaced"/>
</dbReference>
<dbReference type="GO" id="GO:0005764">
    <property type="term" value="C:lysosome"/>
    <property type="evidence" value="ECO:0007669"/>
    <property type="project" value="UniProtKB-SubCell"/>
</dbReference>
<dbReference type="GO" id="GO:0004560">
    <property type="term" value="F:alpha-L-fucosidase activity"/>
    <property type="evidence" value="ECO:0007669"/>
    <property type="project" value="UniProtKB-EC"/>
</dbReference>
<dbReference type="GO" id="GO:0006004">
    <property type="term" value="P:fucose metabolic process"/>
    <property type="evidence" value="ECO:0007669"/>
    <property type="project" value="InterPro"/>
</dbReference>
<dbReference type="GO" id="GO:0016139">
    <property type="term" value="P:glycoside catabolic process"/>
    <property type="evidence" value="ECO:0007669"/>
    <property type="project" value="TreeGrafter"/>
</dbReference>
<dbReference type="GO" id="GO:0006629">
    <property type="term" value="P:lipid metabolic process"/>
    <property type="evidence" value="ECO:0007669"/>
    <property type="project" value="UniProtKB-KW"/>
</dbReference>
<dbReference type="FunFam" id="2.60.40.1180:FF:000013">
    <property type="entry name" value="Alpha-L-fucosidase"/>
    <property type="match status" value="1"/>
</dbReference>
<dbReference type="FunFam" id="3.20.20.80:FF:000027">
    <property type="entry name" value="Alpha-L-fucosidase"/>
    <property type="match status" value="1"/>
</dbReference>
<dbReference type="Gene3D" id="3.20.20.80">
    <property type="entry name" value="Glycosidases"/>
    <property type="match status" value="1"/>
</dbReference>
<dbReference type="Gene3D" id="2.60.40.1180">
    <property type="entry name" value="Golgi alpha-mannosidase II"/>
    <property type="match status" value="1"/>
</dbReference>
<dbReference type="InterPro" id="IPR016286">
    <property type="entry name" value="FUC_metazoa-typ"/>
</dbReference>
<dbReference type="InterPro" id="IPR031919">
    <property type="entry name" value="Fucosidase_C"/>
</dbReference>
<dbReference type="InterPro" id="IPR000933">
    <property type="entry name" value="Glyco_hydro_29"/>
</dbReference>
<dbReference type="InterPro" id="IPR018526">
    <property type="entry name" value="Glyco_hydro_29_CS"/>
</dbReference>
<dbReference type="InterPro" id="IPR013780">
    <property type="entry name" value="Glyco_hydro_b"/>
</dbReference>
<dbReference type="InterPro" id="IPR017853">
    <property type="entry name" value="Glycoside_hydrolase_SF"/>
</dbReference>
<dbReference type="PANTHER" id="PTHR10030">
    <property type="entry name" value="ALPHA-L-FUCOSIDASE"/>
    <property type="match status" value="1"/>
</dbReference>
<dbReference type="PANTHER" id="PTHR10030:SF2">
    <property type="entry name" value="TISSUE ALPHA-L-FUCOSIDASE"/>
    <property type="match status" value="1"/>
</dbReference>
<dbReference type="Pfam" id="PF01120">
    <property type="entry name" value="Alpha_L_fucos"/>
    <property type="match status" value="1"/>
</dbReference>
<dbReference type="Pfam" id="PF16757">
    <property type="entry name" value="Fucosidase_C"/>
    <property type="match status" value="1"/>
</dbReference>
<dbReference type="PIRSF" id="PIRSF001092">
    <property type="entry name" value="Alpha-L-fucosidase"/>
    <property type="match status" value="1"/>
</dbReference>
<dbReference type="PRINTS" id="PR00741">
    <property type="entry name" value="GLHYDRLASE29"/>
</dbReference>
<dbReference type="SMART" id="SM00812">
    <property type="entry name" value="Alpha_L_fucos"/>
    <property type="match status" value="1"/>
</dbReference>
<dbReference type="SUPFAM" id="SSF51445">
    <property type="entry name" value="(Trans)glycosidases"/>
    <property type="match status" value="1"/>
</dbReference>
<dbReference type="PROSITE" id="PS00385">
    <property type="entry name" value="ALPHA_L_FUCOSIDASE"/>
    <property type="match status" value="1"/>
</dbReference>
<feature type="signal peptide" evidence="3">
    <location>
        <begin position="1"/>
        <end position="29"/>
    </location>
</feature>
<feature type="chain" id="PRO_0000010309" description="Tissue alpha-L-fucosidase">
    <location>
        <begin position="30"/>
        <end position="468"/>
    </location>
</feature>
<feature type="site" description="May be important for catalysis" evidence="4">
    <location>
        <position position="298"/>
    </location>
</feature>
<feature type="modified residue" description="Phosphothreonine" evidence="2">
    <location>
        <position position="172"/>
    </location>
</feature>
<feature type="glycosylation site" description="N-linked (GlcNAc...) asparagine" evidence="3">
    <location>
        <position position="243"/>
    </location>
</feature>
<feature type="glycosylation site" description="N-linked (GlcNAc...) asparagine" evidence="3">
    <location>
        <position position="270"/>
    </location>
</feature>
<feature type="glycosylation site" description="N-linked (GlcNAc...) asparagine" evidence="3">
    <location>
        <position position="384"/>
    </location>
</feature>
<accession>Q60HF8</accession>
<accession>Q4R563</accession>
<sequence>MRAPGERWRPAGAALWLLLLLLLLGATESVRRAQPLRRYTPDWPSLDSRPLPSWFDEAKFGVFIHWGVFSVPAWGSEWFWWNWQGEGRPQYQRFMRDNYPPGSSYADFGPQFTARFFHPEEWADLFQAAGAKYVVLTTKHHEGFTNWPSPVSWNWNSKDVGPHRDLVGELGTALRKRNIRYGLYHSLLEWFHPLYLLDKKNGFKTQYFVGAKTMPELYDLVNSYKPDLIWSDGEWECPDTYWNSTNFLSWLYNDSPVKDEVVVNDRWGQNCSCHHGGYYNCEDKFKPQSLPDHKWEMCTSIDKFSWGYRRDMAMSDVTEESEIISELVQTVSLGGNYLLNIGPTKDGLIVPIFQERLLALGKWLSINGEAIYASKPWRVQWEKNTTSVWYTSKGSAVYAIFLHWPENGVLNLESPITTSTTKIMMLRIQGDLKWSTDPDKGLLISLPQLPPSAVPAEFAWTIKLTGVK</sequence>
<evidence type="ECO:0000250" key="1"/>
<evidence type="ECO:0000250" key="2">
    <source>
        <dbReference type="UniProtKB" id="P04066"/>
    </source>
</evidence>
<evidence type="ECO:0000255" key="3"/>
<evidence type="ECO:0000255" key="4">
    <source>
        <dbReference type="PROSITE-ProRule" id="PRU10054"/>
    </source>
</evidence>
<evidence type="ECO:0000305" key="5"/>